<proteinExistence type="inferred from homology"/>
<sequence>MPRRRVIGQRKILPDPKFKSELLAKFVNILMVDGKKSTAEKIVYTALEVMAEKSGKDHLAVFEEALENVRPAVEVKSRRVGGSTYQVPVEVRPVRRNALAMRWVVEAARKRGEKSMAQRLAAEMLDASENKGTSVKKREDVHRMADANKAFAHYRW</sequence>
<comment type="function">
    <text evidence="1">One of the primary rRNA binding proteins, it binds directly to 16S rRNA where it nucleates assembly of the head domain of the 30S subunit. Is located at the subunit interface close to the decoding center, probably blocks exit of the E-site tRNA.</text>
</comment>
<comment type="subunit">
    <text evidence="1">Part of the 30S ribosomal subunit. Contacts proteins S9 and S11.</text>
</comment>
<comment type="similarity">
    <text evidence="1">Belongs to the universal ribosomal protein uS7 family.</text>
</comment>
<dbReference type="EMBL" id="FM954972">
    <property type="protein sequence ID" value="CAV20129.1"/>
    <property type="molecule type" value="Genomic_DNA"/>
</dbReference>
<dbReference type="SMR" id="B7VLG1"/>
<dbReference type="STRING" id="575788.VS_2836"/>
<dbReference type="KEGG" id="vsp:VS_2836"/>
<dbReference type="eggNOG" id="COG0049">
    <property type="taxonomic scope" value="Bacteria"/>
</dbReference>
<dbReference type="HOGENOM" id="CLU_072226_1_1_6"/>
<dbReference type="Proteomes" id="UP000009100">
    <property type="component" value="Chromosome 1"/>
</dbReference>
<dbReference type="GO" id="GO:0015935">
    <property type="term" value="C:small ribosomal subunit"/>
    <property type="evidence" value="ECO:0007669"/>
    <property type="project" value="InterPro"/>
</dbReference>
<dbReference type="GO" id="GO:0019843">
    <property type="term" value="F:rRNA binding"/>
    <property type="evidence" value="ECO:0007669"/>
    <property type="project" value="UniProtKB-UniRule"/>
</dbReference>
<dbReference type="GO" id="GO:0003735">
    <property type="term" value="F:structural constituent of ribosome"/>
    <property type="evidence" value="ECO:0007669"/>
    <property type="project" value="InterPro"/>
</dbReference>
<dbReference type="GO" id="GO:0000049">
    <property type="term" value="F:tRNA binding"/>
    <property type="evidence" value="ECO:0007669"/>
    <property type="project" value="UniProtKB-UniRule"/>
</dbReference>
<dbReference type="GO" id="GO:0006412">
    <property type="term" value="P:translation"/>
    <property type="evidence" value="ECO:0007669"/>
    <property type="project" value="UniProtKB-UniRule"/>
</dbReference>
<dbReference type="CDD" id="cd14869">
    <property type="entry name" value="uS7_Bacteria"/>
    <property type="match status" value="1"/>
</dbReference>
<dbReference type="FunFam" id="1.10.455.10:FF:000001">
    <property type="entry name" value="30S ribosomal protein S7"/>
    <property type="match status" value="1"/>
</dbReference>
<dbReference type="Gene3D" id="1.10.455.10">
    <property type="entry name" value="Ribosomal protein S7 domain"/>
    <property type="match status" value="1"/>
</dbReference>
<dbReference type="HAMAP" id="MF_00480_B">
    <property type="entry name" value="Ribosomal_uS7_B"/>
    <property type="match status" value="1"/>
</dbReference>
<dbReference type="InterPro" id="IPR000235">
    <property type="entry name" value="Ribosomal_uS7"/>
</dbReference>
<dbReference type="InterPro" id="IPR005717">
    <property type="entry name" value="Ribosomal_uS7_bac/org-type"/>
</dbReference>
<dbReference type="InterPro" id="IPR020606">
    <property type="entry name" value="Ribosomal_uS7_CS"/>
</dbReference>
<dbReference type="InterPro" id="IPR023798">
    <property type="entry name" value="Ribosomal_uS7_dom"/>
</dbReference>
<dbReference type="InterPro" id="IPR036823">
    <property type="entry name" value="Ribosomal_uS7_dom_sf"/>
</dbReference>
<dbReference type="NCBIfam" id="TIGR01029">
    <property type="entry name" value="rpsG_bact"/>
    <property type="match status" value="1"/>
</dbReference>
<dbReference type="PANTHER" id="PTHR11205">
    <property type="entry name" value="RIBOSOMAL PROTEIN S7"/>
    <property type="match status" value="1"/>
</dbReference>
<dbReference type="Pfam" id="PF00177">
    <property type="entry name" value="Ribosomal_S7"/>
    <property type="match status" value="1"/>
</dbReference>
<dbReference type="PIRSF" id="PIRSF002122">
    <property type="entry name" value="RPS7p_RPS7a_RPS5e_RPS7o"/>
    <property type="match status" value="1"/>
</dbReference>
<dbReference type="SUPFAM" id="SSF47973">
    <property type="entry name" value="Ribosomal protein S7"/>
    <property type="match status" value="1"/>
</dbReference>
<dbReference type="PROSITE" id="PS00052">
    <property type="entry name" value="RIBOSOMAL_S7"/>
    <property type="match status" value="1"/>
</dbReference>
<reference key="1">
    <citation type="submission" date="2009-02" db="EMBL/GenBank/DDBJ databases">
        <title>Vibrio splendidus str. LGP32 complete genome.</title>
        <authorList>
            <person name="Mazel D."/>
            <person name="Le Roux F."/>
        </authorList>
    </citation>
    <scope>NUCLEOTIDE SEQUENCE [LARGE SCALE GENOMIC DNA]</scope>
    <source>
        <strain>LGP32</strain>
    </source>
</reference>
<evidence type="ECO:0000255" key="1">
    <source>
        <dbReference type="HAMAP-Rule" id="MF_00480"/>
    </source>
</evidence>
<evidence type="ECO:0000305" key="2"/>
<organism>
    <name type="scientific">Vibrio atlanticus (strain LGP32)</name>
    <name type="common">Vibrio splendidus (strain Mel32)</name>
    <dbReference type="NCBI Taxonomy" id="575788"/>
    <lineage>
        <taxon>Bacteria</taxon>
        <taxon>Pseudomonadati</taxon>
        <taxon>Pseudomonadota</taxon>
        <taxon>Gammaproteobacteria</taxon>
        <taxon>Vibrionales</taxon>
        <taxon>Vibrionaceae</taxon>
        <taxon>Vibrio</taxon>
    </lineage>
</organism>
<protein>
    <recommendedName>
        <fullName evidence="1">Small ribosomal subunit protein uS7</fullName>
    </recommendedName>
    <alternativeName>
        <fullName evidence="2">30S ribosomal protein S7</fullName>
    </alternativeName>
</protein>
<keyword id="KW-0687">Ribonucleoprotein</keyword>
<keyword id="KW-0689">Ribosomal protein</keyword>
<keyword id="KW-0694">RNA-binding</keyword>
<keyword id="KW-0699">rRNA-binding</keyword>
<keyword id="KW-0820">tRNA-binding</keyword>
<feature type="chain" id="PRO_1000135635" description="Small ribosomal subunit protein uS7">
    <location>
        <begin position="1"/>
        <end position="156"/>
    </location>
</feature>
<name>RS7_VIBA3</name>
<accession>B7VLG1</accession>
<gene>
    <name evidence="1" type="primary">rpsG</name>
    <name type="ordered locus">VS_2836</name>
</gene>